<gene>
    <name type="primary">HAP3</name>
    <name type="ordered locus">KLLA0E10417g</name>
</gene>
<reference key="1">
    <citation type="journal article" date="1994" name="Mol. Gen. Genet.">
        <title>Sequence of the HAP3 transcription factor of Kluyveromyces lactis predicts the presence of a novel 4-cysteine zinc-finger motif.</title>
        <authorList>
            <person name="Mulder W."/>
            <person name="Scholten I.H.J.M."/>
            <person name="de Boer R.W."/>
            <person name="Grivell L.A."/>
        </authorList>
    </citation>
    <scope>NUCLEOTIDE SEQUENCE [GENOMIC DNA]</scope>
    <source>
        <strain>ATCC 8585 / CBS 2359 / DSM 70799 / NBRC 1267 / NRRL Y-1140 / WM37</strain>
    </source>
</reference>
<reference key="2">
    <citation type="journal article" date="2004" name="Nature">
        <title>Genome evolution in yeasts.</title>
        <authorList>
            <person name="Dujon B."/>
            <person name="Sherman D."/>
            <person name="Fischer G."/>
            <person name="Durrens P."/>
            <person name="Casaregola S."/>
            <person name="Lafontaine I."/>
            <person name="de Montigny J."/>
            <person name="Marck C."/>
            <person name="Neuveglise C."/>
            <person name="Talla E."/>
            <person name="Goffard N."/>
            <person name="Frangeul L."/>
            <person name="Aigle M."/>
            <person name="Anthouard V."/>
            <person name="Babour A."/>
            <person name="Barbe V."/>
            <person name="Barnay S."/>
            <person name="Blanchin S."/>
            <person name="Beckerich J.-M."/>
            <person name="Beyne E."/>
            <person name="Bleykasten C."/>
            <person name="Boisrame A."/>
            <person name="Boyer J."/>
            <person name="Cattolico L."/>
            <person name="Confanioleri F."/>
            <person name="de Daruvar A."/>
            <person name="Despons L."/>
            <person name="Fabre E."/>
            <person name="Fairhead C."/>
            <person name="Ferry-Dumazet H."/>
            <person name="Groppi A."/>
            <person name="Hantraye F."/>
            <person name="Hennequin C."/>
            <person name="Jauniaux N."/>
            <person name="Joyet P."/>
            <person name="Kachouri R."/>
            <person name="Kerrest A."/>
            <person name="Koszul R."/>
            <person name="Lemaire M."/>
            <person name="Lesur I."/>
            <person name="Ma L."/>
            <person name="Muller H."/>
            <person name="Nicaud J.-M."/>
            <person name="Nikolski M."/>
            <person name="Oztas S."/>
            <person name="Ozier-Kalogeropoulos O."/>
            <person name="Pellenz S."/>
            <person name="Potier S."/>
            <person name="Richard G.-F."/>
            <person name="Straub M.-L."/>
            <person name="Suleau A."/>
            <person name="Swennen D."/>
            <person name="Tekaia F."/>
            <person name="Wesolowski-Louvel M."/>
            <person name="Westhof E."/>
            <person name="Wirth B."/>
            <person name="Zeniou-Meyer M."/>
            <person name="Zivanovic Y."/>
            <person name="Bolotin-Fukuhara M."/>
            <person name="Thierry A."/>
            <person name="Bouchier C."/>
            <person name="Caudron B."/>
            <person name="Scarpelli C."/>
            <person name="Gaillardin C."/>
            <person name="Weissenbach J."/>
            <person name="Wincker P."/>
            <person name="Souciet J.-L."/>
        </authorList>
    </citation>
    <scope>NUCLEOTIDE SEQUENCE [LARGE SCALE GENOMIC DNA]</scope>
    <source>
        <strain>ATCC 8585 / CBS 2359 / DSM 70799 / NBRC 1267 / NRRL Y-1140 / WM37</strain>
    </source>
</reference>
<keyword id="KW-0010">Activator</keyword>
<keyword id="KW-0238">DNA-binding</keyword>
<keyword id="KW-0539">Nucleus</keyword>
<keyword id="KW-1185">Reference proteome</keyword>
<keyword id="KW-0804">Transcription</keyword>
<keyword id="KW-0805">Transcription regulation</keyword>
<accession>P40914</accession>
<proteinExistence type="inferred from homology"/>
<organism>
    <name type="scientific">Kluyveromyces lactis (strain ATCC 8585 / CBS 2359 / DSM 70799 / NBRC 1267 / NRRL Y-1140 / WM37)</name>
    <name type="common">Yeast</name>
    <name type="synonym">Candida sphaerica</name>
    <dbReference type="NCBI Taxonomy" id="284590"/>
    <lineage>
        <taxon>Eukaryota</taxon>
        <taxon>Fungi</taxon>
        <taxon>Dikarya</taxon>
        <taxon>Ascomycota</taxon>
        <taxon>Saccharomycotina</taxon>
        <taxon>Saccharomycetes</taxon>
        <taxon>Saccharomycetales</taxon>
        <taxon>Saccharomycetaceae</taxon>
        <taxon>Kluyveromyces</taxon>
    </lineage>
</organism>
<protein>
    <recommendedName>
        <fullName>Transcriptional activator HAP3</fullName>
    </recommendedName>
</protein>
<comment type="function">
    <text>Binds to the upstream activation site (UAS) of the CYC1 gene and other genes involved in mitochondrial electron transport and activates their expression. Recognizes the sequence CCAAT.</text>
</comment>
<comment type="subunit">
    <text>Two complexes bind CCAAT; complex I, that consists of HAP2/3/5 and complex II, that consists of HAP2/3/5/4.</text>
</comment>
<comment type="subcellular location">
    <subcellularLocation>
        <location>Nucleus</location>
    </subcellularLocation>
</comment>
<comment type="similarity">
    <text evidence="3">Belongs to the NFYB/HAP3 subunit family.</text>
</comment>
<feature type="chain" id="PRO_0000204631" description="Transcriptional activator HAP3">
    <location>
        <begin position="1"/>
        <end position="205"/>
    </location>
</feature>
<feature type="DNA-binding region" evidence="1">
    <location>
        <begin position="27"/>
        <end position="33"/>
    </location>
</feature>
<feature type="region of interest" description="Important for subunit interactions" evidence="1">
    <location>
        <begin position="54"/>
        <end position="65"/>
    </location>
</feature>
<feature type="region of interest" description="Disordered" evidence="2">
    <location>
        <begin position="126"/>
        <end position="205"/>
    </location>
</feature>
<feature type="compositionally biased region" description="Basic and acidic residues" evidence="2">
    <location>
        <begin position="133"/>
        <end position="145"/>
    </location>
</feature>
<feature type="compositionally biased region" description="Low complexity" evidence="2">
    <location>
        <begin position="154"/>
        <end position="170"/>
    </location>
</feature>
<feature type="compositionally biased region" description="Polar residues" evidence="2">
    <location>
        <begin position="171"/>
        <end position="184"/>
    </location>
</feature>
<dbReference type="EMBL" id="L25779">
    <property type="protein sequence ID" value="AAC41662.1"/>
    <property type="molecule type" value="Genomic_DNA"/>
</dbReference>
<dbReference type="EMBL" id="CR382125">
    <property type="protein sequence ID" value="CAG99508.1"/>
    <property type="molecule type" value="Genomic_DNA"/>
</dbReference>
<dbReference type="PIR" id="S51565">
    <property type="entry name" value="S51565"/>
</dbReference>
<dbReference type="RefSeq" id="XP_454421.1">
    <property type="nucleotide sequence ID" value="XM_454421.1"/>
</dbReference>
<dbReference type="SMR" id="P40914"/>
<dbReference type="FunCoup" id="P40914">
    <property type="interactions" value="757"/>
</dbReference>
<dbReference type="STRING" id="284590.P40914"/>
<dbReference type="PaxDb" id="284590-P40914"/>
<dbReference type="KEGG" id="kla:KLLA0_E10429g"/>
<dbReference type="eggNOG" id="KOG0869">
    <property type="taxonomic scope" value="Eukaryota"/>
</dbReference>
<dbReference type="HOGENOM" id="CLU_066247_9_0_1"/>
<dbReference type="InParanoid" id="P40914"/>
<dbReference type="Proteomes" id="UP000000598">
    <property type="component" value="Chromosome E"/>
</dbReference>
<dbReference type="GO" id="GO:0016602">
    <property type="term" value="C:CCAAT-binding factor complex"/>
    <property type="evidence" value="ECO:0007669"/>
    <property type="project" value="InterPro"/>
</dbReference>
<dbReference type="GO" id="GO:0001228">
    <property type="term" value="F:DNA-binding transcription activator activity, RNA polymerase II-specific"/>
    <property type="evidence" value="ECO:0007669"/>
    <property type="project" value="InterPro"/>
</dbReference>
<dbReference type="GO" id="GO:0046982">
    <property type="term" value="F:protein heterodimerization activity"/>
    <property type="evidence" value="ECO:0007669"/>
    <property type="project" value="InterPro"/>
</dbReference>
<dbReference type="GO" id="GO:0000978">
    <property type="term" value="F:RNA polymerase II cis-regulatory region sequence-specific DNA binding"/>
    <property type="evidence" value="ECO:0007669"/>
    <property type="project" value="TreeGrafter"/>
</dbReference>
<dbReference type="CDD" id="cd22907">
    <property type="entry name" value="HFD_NFYB"/>
    <property type="match status" value="1"/>
</dbReference>
<dbReference type="Gene3D" id="1.10.20.10">
    <property type="entry name" value="Histone, subunit A"/>
    <property type="match status" value="1"/>
</dbReference>
<dbReference type="InterPro" id="IPR003958">
    <property type="entry name" value="CBFA_NFYB_domain"/>
</dbReference>
<dbReference type="InterPro" id="IPR009072">
    <property type="entry name" value="Histone-fold"/>
</dbReference>
<dbReference type="InterPro" id="IPR027113">
    <property type="entry name" value="Transc_fact_NFYB/HAP3"/>
</dbReference>
<dbReference type="InterPro" id="IPR003956">
    <property type="entry name" value="Transcrpt_fac_NFYB/HAP3_CS"/>
</dbReference>
<dbReference type="PANTHER" id="PTHR11064">
    <property type="entry name" value="CCAAT-BINDING TRANSCRIPTION FACTOR-RELATED"/>
    <property type="match status" value="1"/>
</dbReference>
<dbReference type="PANTHER" id="PTHR11064:SF9">
    <property type="entry name" value="NUCLEAR TRANSCRIPTION FACTOR Y SUBUNIT BETA"/>
    <property type="match status" value="1"/>
</dbReference>
<dbReference type="Pfam" id="PF00808">
    <property type="entry name" value="CBFD_NFYB_HMF"/>
    <property type="match status" value="1"/>
</dbReference>
<dbReference type="PRINTS" id="PR00615">
    <property type="entry name" value="CCAATSUBUNTA"/>
</dbReference>
<dbReference type="SUPFAM" id="SSF47113">
    <property type="entry name" value="Histone-fold"/>
    <property type="match status" value="1"/>
</dbReference>
<dbReference type="PROSITE" id="PS00685">
    <property type="entry name" value="NFYB_HAP3"/>
    <property type="match status" value="1"/>
</dbReference>
<name>HAP3_KLULA</name>
<sequence>MDTETEAEKQERHNNYLNELAEQDRWLPINNVARLMKNTLPATTKVSKDAKECMQECVSEFISFVTSEACDRCTSGKRKTINGEDILLSLHALGFENYAEVLKIYLAKYRQQQAIKNQMMYPKEDVEGSYTEEESRAEDADHVTQERQQPLHPVPSSASTTTSTEVSASEHVQSSSKSTHNPAQAQPRIVVQQPLGSRHSTADHL</sequence>
<evidence type="ECO:0000250" key="1"/>
<evidence type="ECO:0000256" key="2">
    <source>
        <dbReference type="SAM" id="MobiDB-lite"/>
    </source>
</evidence>
<evidence type="ECO:0000305" key="3"/>